<protein>
    <recommendedName>
        <fullName>Short-chain dehydrogenase/reductase homolog YusS</fullName>
    </recommendedName>
</protein>
<organism>
    <name type="scientific">Bacillus subtilis (strain 168)</name>
    <dbReference type="NCBI Taxonomy" id="224308"/>
    <lineage>
        <taxon>Bacteria</taxon>
        <taxon>Bacillati</taxon>
        <taxon>Bacillota</taxon>
        <taxon>Bacilli</taxon>
        <taxon>Bacillales</taxon>
        <taxon>Bacillaceae</taxon>
        <taxon>Bacillus</taxon>
    </lineage>
</organism>
<dbReference type="EMBL" id="AL009126">
    <property type="protein sequence ID" value="CAB15280.1"/>
    <property type="molecule type" value="Genomic_DNA"/>
</dbReference>
<dbReference type="PIR" id="D70022">
    <property type="entry name" value="D70022"/>
</dbReference>
<dbReference type="RefSeq" id="NP_391170.1">
    <property type="nucleotide sequence ID" value="NC_000964.3"/>
</dbReference>
<dbReference type="RefSeq" id="WP_003243892.1">
    <property type="nucleotide sequence ID" value="NC_000964.3"/>
</dbReference>
<dbReference type="SMR" id="O32185"/>
<dbReference type="FunCoup" id="O32185">
    <property type="interactions" value="29"/>
</dbReference>
<dbReference type="STRING" id="224308.BSU32910"/>
<dbReference type="PaxDb" id="224308-BSU32910"/>
<dbReference type="EnsemblBacteria" id="CAB15280">
    <property type="protein sequence ID" value="CAB15280"/>
    <property type="gene ID" value="BSU_32910"/>
</dbReference>
<dbReference type="GeneID" id="935924"/>
<dbReference type="KEGG" id="bsu:BSU32910"/>
<dbReference type="PATRIC" id="fig|224308.179.peg.3567"/>
<dbReference type="eggNOG" id="COG1028">
    <property type="taxonomic scope" value="Bacteria"/>
</dbReference>
<dbReference type="InParanoid" id="O32185"/>
<dbReference type="OrthoDB" id="9803333at2"/>
<dbReference type="PhylomeDB" id="O32185"/>
<dbReference type="BioCyc" id="BSUB:BSU32910-MONOMER"/>
<dbReference type="Proteomes" id="UP000001570">
    <property type="component" value="Chromosome"/>
</dbReference>
<dbReference type="Gene3D" id="3.40.50.720">
    <property type="entry name" value="NAD(P)-binding Rossmann-like Domain"/>
    <property type="match status" value="1"/>
</dbReference>
<dbReference type="InterPro" id="IPR036291">
    <property type="entry name" value="NAD(P)-bd_dom_sf"/>
</dbReference>
<dbReference type="InterPro" id="IPR050259">
    <property type="entry name" value="SDR"/>
</dbReference>
<dbReference type="InterPro" id="IPR002347">
    <property type="entry name" value="SDR_fam"/>
</dbReference>
<dbReference type="PANTHER" id="PTHR42879">
    <property type="entry name" value="3-OXOACYL-(ACYL-CARRIER-PROTEIN) REDUCTASE"/>
    <property type="match status" value="1"/>
</dbReference>
<dbReference type="PANTHER" id="PTHR42879:SF2">
    <property type="entry name" value="3-OXOACYL-[ACYL-CARRIER-PROTEIN] REDUCTASE FABG"/>
    <property type="match status" value="1"/>
</dbReference>
<dbReference type="Pfam" id="PF00106">
    <property type="entry name" value="adh_short"/>
    <property type="match status" value="1"/>
</dbReference>
<dbReference type="PRINTS" id="PR00081">
    <property type="entry name" value="GDHRDH"/>
</dbReference>
<dbReference type="SUPFAM" id="SSF51735">
    <property type="entry name" value="NAD(P)-binding Rossmann-fold domains"/>
    <property type="match status" value="1"/>
</dbReference>
<reference key="1">
    <citation type="journal article" date="1997" name="Nature">
        <title>The complete genome sequence of the Gram-positive bacterium Bacillus subtilis.</title>
        <authorList>
            <person name="Kunst F."/>
            <person name="Ogasawara N."/>
            <person name="Moszer I."/>
            <person name="Albertini A.M."/>
            <person name="Alloni G."/>
            <person name="Azevedo V."/>
            <person name="Bertero M.G."/>
            <person name="Bessieres P."/>
            <person name="Bolotin A."/>
            <person name="Borchert S."/>
            <person name="Borriss R."/>
            <person name="Boursier L."/>
            <person name="Brans A."/>
            <person name="Braun M."/>
            <person name="Brignell S.C."/>
            <person name="Bron S."/>
            <person name="Brouillet S."/>
            <person name="Bruschi C.V."/>
            <person name="Caldwell B."/>
            <person name="Capuano V."/>
            <person name="Carter N.M."/>
            <person name="Choi S.-K."/>
            <person name="Codani J.-J."/>
            <person name="Connerton I.F."/>
            <person name="Cummings N.J."/>
            <person name="Daniel R.A."/>
            <person name="Denizot F."/>
            <person name="Devine K.M."/>
            <person name="Duesterhoeft A."/>
            <person name="Ehrlich S.D."/>
            <person name="Emmerson P.T."/>
            <person name="Entian K.-D."/>
            <person name="Errington J."/>
            <person name="Fabret C."/>
            <person name="Ferrari E."/>
            <person name="Foulger D."/>
            <person name="Fritz C."/>
            <person name="Fujita M."/>
            <person name="Fujita Y."/>
            <person name="Fuma S."/>
            <person name="Galizzi A."/>
            <person name="Galleron N."/>
            <person name="Ghim S.-Y."/>
            <person name="Glaser P."/>
            <person name="Goffeau A."/>
            <person name="Golightly E.J."/>
            <person name="Grandi G."/>
            <person name="Guiseppi G."/>
            <person name="Guy B.J."/>
            <person name="Haga K."/>
            <person name="Haiech J."/>
            <person name="Harwood C.R."/>
            <person name="Henaut A."/>
            <person name="Hilbert H."/>
            <person name="Holsappel S."/>
            <person name="Hosono S."/>
            <person name="Hullo M.-F."/>
            <person name="Itaya M."/>
            <person name="Jones L.-M."/>
            <person name="Joris B."/>
            <person name="Karamata D."/>
            <person name="Kasahara Y."/>
            <person name="Klaerr-Blanchard M."/>
            <person name="Klein C."/>
            <person name="Kobayashi Y."/>
            <person name="Koetter P."/>
            <person name="Koningstein G."/>
            <person name="Krogh S."/>
            <person name="Kumano M."/>
            <person name="Kurita K."/>
            <person name="Lapidus A."/>
            <person name="Lardinois S."/>
            <person name="Lauber J."/>
            <person name="Lazarevic V."/>
            <person name="Lee S.-M."/>
            <person name="Levine A."/>
            <person name="Liu H."/>
            <person name="Masuda S."/>
            <person name="Mauel C."/>
            <person name="Medigue C."/>
            <person name="Medina N."/>
            <person name="Mellado R.P."/>
            <person name="Mizuno M."/>
            <person name="Moestl D."/>
            <person name="Nakai S."/>
            <person name="Noback M."/>
            <person name="Noone D."/>
            <person name="O'Reilly M."/>
            <person name="Ogawa K."/>
            <person name="Ogiwara A."/>
            <person name="Oudega B."/>
            <person name="Park S.-H."/>
            <person name="Parro V."/>
            <person name="Pohl T.M."/>
            <person name="Portetelle D."/>
            <person name="Porwollik S."/>
            <person name="Prescott A.M."/>
            <person name="Presecan E."/>
            <person name="Pujic P."/>
            <person name="Purnelle B."/>
            <person name="Rapoport G."/>
            <person name="Rey M."/>
            <person name="Reynolds S."/>
            <person name="Rieger M."/>
            <person name="Rivolta C."/>
            <person name="Rocha E."/>
            <person name="Roche B."/>
            <person name="Rose M."/>
            <person name="Sadaie Y."/>
            <person name="Sato T."/>
            <person name="Scanlan E."/>
            <person name="Schleich S."/>
            <person name="Schroeter R."/>
            <person name="Scoffone F."/>
            <person name="Sekiguchi J."/>
            <person name="Sekowska A."/>
            <person name="Seror S.J."/>
            <person name="Serror P."/>
            <person name="Shin B.-S."/>
            <person name="Soldo B."/>
            <person name="Sorokin A."/>
            <person name="Tacconi E."/>
            <person name="Takagi T."/>
            <person name="Takahashi H."/>
            <person name="Takemaru K."/>
            <person name="Takeuchi M."/>
            <person name="Tamakoshi A."/>
            <person name="Tanaka T."/>
            <person name="Terpstra P."/>
            <person name="Tognoni A."/>
            <person name="Tosato V."/>
            <person name="Uchiyama S."/>
            <person name="Vandenbol M."/>
            <person name="Vannier F."/>
            <person name="Vassarotti A."/>
            <person name="Viari A."/>
            <person name="Wambutt R."/>
            <person name="Wedler E."/>
            <person name="Wedler H."/>
            <person name="Weitzenegger T."/>
            <person name="Winters P."/>
            <person name="Wipat A."/>
            <person name="Yamamoto H."/>
            <person name="Yamane K."/>
            <person name="Yasumoto K."/>
            <person name="Yata K."/>
            <person name="Yoshida K."/>
            <person name="Yoshikawa H.-F."/>
            <person name="Zumstein E."/>
            <person name="Yoshikawa H."/>
            <person name="Danchin A."/>
        </authorList>
    </citation>
    <scope>NUCLEOTIDE SEQUENCE [LARGE SCALE GENOMIC DNA]</scope>
    <source>
        <strain>168</strain>
    </source>
</reference>
<keyword id="KW-1185">Reference proteome</keyword>
<gene>
    <name type="primary">yusS</name>
    <name type="ordered locus">BSU32910</name>
</gene>
<sequence length="109" mass="11427">MNVLNKIALVTGGGTGIGKAASMELAKRGAIVAVNYSRSQSEAEETVEMIQKAGGQAFAIQADVSKNSDVQDMIQAIVNTHGTVDILVNNASITRHIPMDDLEAATEDV</sequence>
<comment type="similarity">
    <text evidence="1">Belongs to the short-chain dehydrogenases/reductases (SDR) family.</text>
</comment>
<comment type="caution">
    <text evidence="1">Could be the product of a pseudogene. This sequence is shorter than orthologs and lacks the conserved active site Tyr residue.</text>
</comment>
<accession>O32185</accession>
<proteinExistence type="uncertain"/>
<evidence type="ECO:0000305" key="1"/>
<feature type="chain" id="PRO_0000377002" description="Short-chain dehydrogenase/reductase homolog YusS">
    <location>
        <begin position="1"/>
        <end position="109"/>
    </location>
</feature>
<name>YUSS_BACSU</name>